<comment type="function">
    <text evidence="1">With S4 and S12 plays an important role in translational accuracy.</text>
</comment>
<comment type="function">
    <text evidence="1">Located at the back of the 30S subunit body where it stabilizes the conformation of the head with respect to the body.</text>
</comment>
<comment type="subunit">
    <text evidence="1">Part of the 30S ribosomal subunit. Contacts proteins S4 and S8.</text>
</comment>
<comment type="domain">
    <text>The N-terminal domain interacts with the head of the 30S subunit; the C-terminal domain interacts with the body and contacts protein S4. The interaction surface between S4 and S5 is involved in control of translational fidelity.</text>
</comment>
<comment type="similarity">
    <text evidence="1">Belongs to the universal ribosomal protein uS5 family.</text>
</comment>
<accession>Q30Z59</accession>
<dbReference type="EMBL" id="CP000112">
    <property type="protein sequence ID" value="ABB39037.1"/>
    <property type="molecule type" value="Genomic_DNA"/>
</dbReference>
<dbReference type="RefSeq" id="WP_011368128.1">
    <property type="nucleotide sequence ID" value="NC_007519.1"/>
</dbReference>
<dbReference type="SMR" id="Q30Z59"/>
<dbReference type="STRING" id="207559.Dde_2240"/>
<dbReference type="KEGG" id="dde:Dde_2240"/>
<dbReference type="eggNOG" id="COG0098">
    <property type="taxonomic scope" value="Bacteria"/>
</dbReference>
<dbReference type="HOGENOM" id="CLU_065898_2_2_7"/>
<dbReference type="Proteomes" id="UP000002710">
    <property type="component" value="Chromosome"/>
</dbReference>
<dbReference type="GO" id="GO:0015935">
    <property type="term" value="C:small ribosomal subunit"/>
    <property type="evidence" value="ECO:0007669"/>
    <property type="project" value="InterPro"/>
</dbReference>
<dbReference type="GO" id="GO:0019843">
    <property type="term" value="F:rRNA binding"/>
    <property type="evidence" value="ECO:0007669"/>
    <property type="project" value="UniProtKB-UniRule"/>
</dbReference>
<dbReference type="GO" id="GO:0003735">
    <property type="term" value="F:structural constituent of ribosome"/>
    <property type="evidence" value="ECO:0007669"/>
    <property type="project" value="InterPro"/>
</dbReference>
<dbReference type="GO" id="GO:0006412">
    <property type="term" value="P:translation"/>
    <property type="evidence" value="ECO:0007669"/>
    <property type="project" value="UniProtKB-UniRule"/>
</dbReference>
<dbReference type="FunFam" id="3.30.160.20:FF:000001">
    <property type="entry name" value="30S ribosomal protein S5"/>
    <property type="match status" value="1"/>
</dbReference>
<dbReference type="FunFam" id="3.30.230.10:FF:000002">
    <property type="entry name" value="30S ribosomal protein S5"/>
    <property type="match status" value="1"/>
</dbReference>
<dbReference type="Gene3D" id="3.30.160.20">
    <property type="match status" value="1"/>
</dbReference>
<dbReference type="Gene3D" id="3.30.230.10">
    <property type="match status" value="1"/>
</dbReference>
<dbReference type="HAMAP" id="MF_01307_B">
    <property type="entry name" value="Ribosomal_uS5_B"/>
    <property type="match status" value="1"/>
</dbReference>
<dbReference type="InterPro" id="IPR020568">
    <property type="entry name" value="Ribosomal_Su5_D2-typ_SF"/>
</dbReference>
<dbReference type="InterPro" id="IPR000851">
    <property type="entry name" value="Ribosomal_uS5"/>
</dbReference>
<dbReference type="InterPro" id="IPR005712">
    <property type="entry name" value="Ribosomal_uS5_bac-type"/>
</dbReference>
<dbReference type="InterPro" id="IPR005324">
    <property type="entry name" value="Ribosomal_uS5_C"/>
</dbReference>
<dbReference type="InterPro" id="IPR013810">
    <property type="entry name" value="Ribosomal_uS5_N"/>
</dbReference>
<dbReference type="InterPro" id="IPR018192">
    <property type="entry name" value="Ribosomal_uS5_N_CS"/>
</dbReference>
<dbReference type="InterPro" id="IPR014721">
    <property type="entry name" value="Ribsml_uS5_D2-typ_fold_subgr"/>
</dbReference>
<dbReference type="NCBIfam" id="TIGR01021">
    <property type="entry name" value="rpsE_bact"/>
    <property type="match status" value="1"/>
</dbReference>
<dbReference type="PANTHER" id="PTHR48277">
    <property type="entry name" value="MITOCHONDRIAL RIBOSOMAL PROTEIN S5"/>
    <property type="match status" value="1"/>
</dbReference>
<dbReference type="PANTHER" id="PTHR48277:SF1">
    <property type="entry name" value="MITOCHONDRIAL RIBOSOMAL PROTEIN S5"/>
    <property type="match status" value="1"/>
</dbReference>
<dbReference type="Pfam" id="PF00333">
    <property type="entry name" value="Ribosomal_S5"/>
    <property type="match status" value="1"/>
</dbReference>
<dbReference type="Pfam" id="PF03719">
    <property type="entry name" value="Ribosomal_S5_C"/>
    <property type="match status" value="1"/>
</dbReference>
<dbReference type="SUPFAM" id="SSF54768">
    <property type="entry name" value="dsRNA-binding domain-like"/>
    <property type="match status" value="1"/>
</dbReference>
<dbReference type="SUPFAM" id="SSF54211">
    <property type="entry name" value="Ribosomal protein S5 domain 2-like"/>
    <property type="match status" value="1"/>
</dbReference>
<dbReference type="PROSITE" id="PS00585">
    <property type="entry name" value="RIBOSOMAL_S5"/>
    <property type="match status" value="1"/>
</dbReference>
<dbReference type="PROSITE" id="PS50881">
    <property type="entry name" value="S5_DSRBD"/>
    <property type="match status" value="1"/>
</dbReference>
<name>RS5_OLEA2</name>
<reference key="1">
    <citation type="journal article" date="2011" name="J. Bacteriol.">
        <title>Complete genome sequence and updated annotation of Desulfovibrio alaskensis G20.</title>
        <authorList>
            <person name="Hauser L.J."/>
            <person name="Land M.L."/>
            <person name="Brown S.D."/>
            <person name="Larimer F."/>
            <person name="Keller K.L."/>
            <person name="Rapp-Giles B.J."/>
            <person name="Price M.N."/>
            <person name="Lin M."/>
            <person name="Bruce D.C."/>
            <person name="Detter J.C."/>
            <person name="Tapia R."/>
            <person name="Han C.S."/>
            <person name="Goodwin L.A."/>
            <person name="Cheng J.F."/>
            <person name="Pitluck S."/>
            <person name="Copeland A."/>
            <person name="Lucas S."/>
            <person name="Nolan M."/>
            <person name="Lapidus A.L."/>
            <person name="Palumbo A.V."/>
            <person name="Wall J.D."/>
        </authorList>
    </citation>
    <scope>NUCLEOTIDE SEQUENCE [LARGE SCALE GENOMIC DNA]</scope>
    <source>
        <strain>ATCC BAA-1058 / DSM 17464 / G20</strain>
    </source>
</reference>
<sequence>MEQNEFGLIEKIVDLNRVAKVVKGGRRFSFSALVVVGDGNGSVGFGMGKAQEVPEALRKATERAKKGMVQVPLVDGTLPYEVLGAFGAGRVLLKPASKGTGIIAGGAVRAIMEAVGIHDVLAKAIGTNNPHNVLRATMAGLTSLRSAEYVSQLRGKKLEAPRK</sequence>
<keyword id="KW-1185">Reference proteome</keyword>
<keyword id="KW-0687">Ribonucleoprotein</keyword>
<keyword id="KW-0689">Ribosomal protein</keyword>
<keyword id="KW-0694">RNA-binding</keyword>
<keyword id="KW-0699">rRNA-binding</keyword>
<protein>
    <recommendedName>
        <fullName evidence="1">Small ribosomal subunit protein uS5</fullName>
    </recommendedName>
    <alternativeName>
        <fullName evidence="2">30S ribosomal protein S5</fullName>
    </alternativeName>
</protein>
<proteinExistence type="inferred from homology"/>
<organism>
    <name type="scientific">Oleidesulfovibrio alaskensis (strain ATCC BAA-1058 / DSM 17464 / G20)</name>
    <name type="common">Desulfovibrio alaskensis</name>
    <dbReference type="NCBI Taxonomy" id="207559"/>
    <lineage>
        <taxon>Bacteria</taxon>
        <taxon>Pseudomonadati</taxon>
        <taxon>Thermodesulfobacteriota</taxon>
        <taxon>Desulfovibrionia</taxon>
        <taxon>Desulfovibrionales</taxon>
        <taxon>Desulfovibrionaceae</taxon>
        <taxon>Oleidesulfovibrio</taxon>
    </lineage>
</organism>
<feature type="chain" id="PRO_0000230344" description="Small ribosomal subunit protein uS5">
    <location>
        <begin position="1"/>
        <end position="163"/>
    </location>
</feature>
<feature type="domain" description="S5 DRBM" evidence="1">
    <location>
        <begin position="8"/>
        <end position="71"/>
    </location>
</feature>
<evidence type="ECO:0000255" key="1">
    <source>
        <dbReference type="HAMAP-Rule" id="MF_01307"/>
    </source>
</evidence>
<evidence type="ECO:0000305" key="2"/>
<gene>
    <name evidence="1" type="primary">rpsE</name>
    <name type="ordered locus">Dde_2240</name>
</gene>